<proteinExistence type="inferred from homology"/>
<reference key="1">
    <citation type="submission" date="2008-02" db="EMBL/GenBank/DDBJ databases">
        <title>Complete sequence of Synechococcus sp. PCC 7002.</title>
        <authorList>
            <person name="Li T."/>
            <person name="Zhao J."/>
            <person name="Zhao C."/>
            <person name="Liu Z."/>
            <person name="Zhao F."/>
            <person name="Marquardt J."/>
            <person name="Nomura C.T."/>
            <person name="Persson S."/>
            <person name="Detter J.C."/>
            <person name="Richardson P.M."/>
            <person name="Lanz C."/>
            <person name="Schuster S.C."/>
            <person name="Wang J."/>
            <person name="Li S."/>
            <person name="Huang X."/>
            <person name="Cai T."/>
            <person name="Yu Z."/>
            <person name="Luo J."/>
            <person name="Zhao J."/>
            <person name="Bryant D.A."/>
        </authorList>
    </citation>
    <scope>NUCLEOTIDE SEQUENCE [LARGE SCALE GENOMIC DNA]</scope>
    <source>
        <strain>ATCC 27264 / PCC 7002 / PR-6</strain>
    </source>
</reference>
<name>Y1742_PICP2</name>
<gene>
    <name type="ordered locus">SYNPCC7002_A1742</name>
</gene>
<keyword id="KW-1185">Reference proteome</keyword>
<feature type="chain" id="PRO_1000136909" description="UPF0284 protein SYNPCC7002_A1742">
    <location>
        <begin position="1"/>
        <end position="368"/>
    </location>
</feature>
<organism>
    <name type="scientific">Picosynechococcus sp. (strain ATCC 27264 / PCC 7002 / PR-6)</name>
    <name type="common">Agmenellum quadruplicatum</name>
    <dbReference type="NCBI Taxonomy" id="32049"/>
    <lineage>
        <taxon>Bacteria</taxon>
        <taxon>Bacillati</taxon>
        <taxon>Cyanobacteriota</taxon>
        <taxon>Cyanophyceae</taxon>
        <taxon>Oscillatoriophycideae</taxon>
        <taxon>Chroococcales</taxon>
        <taxon>Geminocystaceae</taxon>
        <taxon>Picosynechococcus</taxon>
    </lineage>
</organism>
<protein>
    <recommendedName>
        <fullName evidence="1">UPF0284 protein SYNPCC7002_A1742</fullName>
    </recommendedName>
</protein>
<comment type="similarity">
    <text evidence="1">Belongs to the UPF0284 family.</text>
</comment>
<evidence type="ECO:0000255" key="1">
    <source>
        <dbReference type="HAMAP-Rule" id="MF_01086"/>
    </source>
</evidence>
<dbReference type="EMBL" id="CP000951">
    <property type="protein sequence ID" value="ACA99731.1"/>
    <property type="molecule type" value="Genomic_DNA"/>
</dbReference>
<dbReference type="SMR" id="B1XPL7"/>
<dbReference type="STRING" id="32049.SYNPCC7002_A1742"/>
<dbReference type="KEGG" id="syp:SYNPCC7002_A1742"/>
<dbReference type="eggNOG" id="COG2038">
    <property type="taxonomic scope" value="Bacteria"/>
</dbReference>
<dbReference type="HOGENOM" id="CLU_053134_1_0_3"/>
<dbReference type="Proteomes" id="UP000001688">
    <property type="component" value="Chromosome"/>
</dbReference>
<dbReference type="GO" id="GO:0008939">
    <property type="term" value="F:nicotinate-nucleotide-dimethylbenzimidazole phosphoribosyltransferase activity"/>
    <property type="evidence" value="ECO:0007669"/>
    <property type="project" value="InterPro"/>
</dbReference>
<dbReference type="CDD" id="cd02439">
    <property type="entry name" value="DMB-PRT_CobT"/>
    <property type="match status" value="1"/>
</dbReference>
<dbReference type="Gene3D" id="3.40.50.10210">
    <property type="match status" value="1"/>
</dbReference>
<dbReference type="HAMAP" id="MF_01086">
    <property type="entry name" value="UPF0284"/>
    <property type="match status" value="1"/>
</dbReference>
<dbReference type="InterPro" id="IPR003200">
    <property type="entry name" value="Nict_dMeBzImd_PRibTrfase"/>
</dbReference>
<dbReference type="InterPro" id="IPR002805">
    <property type="entry name" value="Nict_dMeBzImd_PRibTrfase_arc"/>
</dbReference>
<dbReference type="InterPro" id="IPR036087">
    <property type="entry name" value="Nict_dMeBzImd_PRibTrfase_sf"/>
</dbReference>
<dbReference type="NCBIfam" id="TIGR00303">
    <property type="entry name" value="nicotinate mononucleotide-dependent phosphoribosyltransferase CobT"/>
    <property type="match status" value="1"/>
</dbReference>
<dbReference type="NCBIfam" id="NF003373">
    <property type="entry name" value="PRK04447.1-6"/>
    <property type="match status" value="1"/>
</dbReference>
<dbReference type="PANTHER" id="PTHR38811">
    <property type="match status" value="1"/>
</dbReference>
<dbReference type="PANTHER" id="PTHR38811:SF1">
    <property type="entry name" value="UPF0284 PROTEIN SLL1500"/>
    <property type="match status" value="1"/>
</dbReference>
<dbReference type="SUPFAM" id="SSF52733">
    <property type="entry name" value="Nicotinate mononucleotide:5,6-dimethylbenzimidazole phosphoribosyltransferase (CobT)"/>
    <property type="match status" value="1"/>
</dbReference>
<sequence length="368" mass="39476">MIRIYTQQTQGQAWLSNHQQKSVVFACGLGFTDTALIPNISAAGATPEARKYTAIADAECICHGFREKAIYPLPPLIVGASPAILSRAILSHYQIPAYLFDTGLWLKPDKNAVDCIDVSGQKARCVSTGKALEFSTVNKLFEQGLTWGETLATQYLNHLFVLGECVVAGTTTALGVLTGLGYDANQKVNSSYIECNHDLKWQIVQTGLKKANLNPNPDPFAVVAAVGDPMQIFVAGMAIALSRTQGVLLAGGTQMLAVYALMERICKYHSLDFDPKNIAVGTTRWVAEDPTGDTVGLAELIGEVPLLATQLSFQTSQYSQLQSYEQGYVKEGVGAGGLAIAAHLAYGATQAELLAMIERTIVPYLAAN</sequence>
<accession>B1XPL7</accession>